<organism>
    <name type="scientific">Caulobacter vibrioides (strain NA1000 / CB15N)</name>
    <name type="common">Caulobacter crescentus</name>
    <dbReference type="NCBI Taxonomy" id="565050"/>
    <lineage>
        <taxon>Bacteria</taxon>
        <taxon>Pseudomonadati</taxon>
        <taxon>Pseudomonadota</taxon>
        <taxon>Alphaproteobacteria</taxon>
        <taxon>Caulobacterales</taxon>
        <taxon>Caulobacteraceae</taxon>
        <taxon>Caulobacter</taxon>
    </lineage>
</organism>
<comment type="function">
    <text evidence="1">Transfers the 4'-phosphopantetheine moiety from coenzyme A to a Ser of acyl-carrier-protein.</text>
</comment>
<comment type="catalytic activity">
    <reaction evidence="1">
        <text>apo-[ACP] + CoA = holo-[ACP] + adenosine 3',5'-bisphosphate + H(+)</text>
        <dbReference type="Rhea" id="RHEA:12068"/>
        <dbReference type="Rhea" id="RHEA-COMP:9685"/>
        <dbReference type="Rhea" id="RHEA-COMP:9690"/>
        <dbReference type="ChEBI" id="CHEBI:15378"/>
        <dbReference type="ChEBI" id="CHEBI:29999"/>
        <dbReference type="ChEBI" id="CHEBI:57287"/>
        <dbReference type="ChEBI" id="CHEBI:58343"/>
        <dbReference type="ChEBI" id="CHEBI:64479"/>
        <dbReference type="EC" id="2.7.8.7"/>
    </reaction>
</comment>
<comment type="cofactor">
    <cofactor evidence="1">
        <name>Mg(2+)</name>
        <dbReference type="ChEBI" id="CHEBI:18420"/>
    </cofactor>
</comment>
<comment type="subcellular location">
    <subcellularLocation>
        <location evidence="1">Cytoplasm</location>
    </subcellularLocation>
</comment>
<comment type="similarity">
    <text evidence="1">Belongs to the P-Pant transferase superfamily. AcpS family.</text>
</comment>
<sequence>MIIGIGSDLCDIRRIEKSLERFGDRFTHKVFTETERTRSERKPDRASSYAKRFAAKEACSKALGTGLKRGVHLAGMGVVNLPSGQPTMALTGGALERLKAMVPEGMEPVIHLSLTDDHPYAQAFVIIEALPKR</sequence>
<dbReference type="EC" id="2.7.8.7" evidence="1"/>
<dbReference type="EMBL" id="CP001340">
    <property type="protein sequence ID" value="ACL95092.1"/>
    <property type="molecule type" value="Genomic_DNA"/>
</dbReference>
<dbReference type="RefSeq" id="WP_010919432.1">
    <property type="nucleotide sequence ID" value="NC_011916.1"/>
</dbReference>
<dbReference type="RefSeq" id="YP_002517000.1">
    <property type="nucleotide sequence ID" value="NC_011916.1"/>
</dbReference>
<dbReference type="SMR" id="B8H624"/>
<dbReference type="GeneID" id="7331605"/>
<dbReference type="KEGG" id="ccs:CCNA_01627"/>
<dbReference type="PATRIC" id="fig|565050.3.peg.1605"/>
<dbReference type="HOGENOM" id="CLU_089696_0_2_5"/>
<dbReference type="OrthoDB" id="517356at2"/>
<dbReference type="PhylomeDB" id="B8H624"/>
<dbReference type="Proteomes" id="UP000001364">
    <property type="component" value="Chromosome"/>
</dbReference>
<dbReference type="GO" id="GO:0005737">
    <property type="term" value="C:cytoplasm"/>
    <property type="evidence" value="ECO:0007669"/>
    <property type="project" value="UniProtKB-SubCell"/>
</dbReference>
<dbReference type="GO" id="GO:0008897">
    <property type="term" value="F:holo-[acyl-carrier-protein] synthase activity"/>
    <property type="evidence" value="ECO:0007669"/>
    <property type="project" value="UniProtKB-UniRule"/>
</dbReference>
<dbReference type="GO" id="GO:0000287">
    <property type="term" value="F:magnesium ion binding"/>
    <property type="evidence" value="ECO:0007669"/>
    <property type="project" value="UniProtKB-UniRule"/>
</dbReference>
<dbReference type="GO" id="GO:0006633">
    <property type="term" value="P:fatty acid biosynthetic process"/>
    <property type="evidence" value="ECO:0007669"/>
    <property type="project" value="UniProtKB-UniRule"/>
</dbReference>
<dbReference type="Gene3D" id="3.90.470.20">
    <property type="entry name" value="4'-phosphopantetheinyl transferase domain"/>
    <property type="match status" value="1"/>
</dbReference>
<dbReference type="HAMAP" id="MF_00101">
    <property type="entry name" value="AcpS"/>
    <property type="match status" value="1"/>
</dbReference>
<dbReference type="InterPro" id="IPR008278">
    <property type="entry name" value="4-PPantetheinyl_Trfase_dom"/>
</dbReference>
<dbReference type="InterPro" id="IPR037143">
    <property type="entry name" value="4-PPantetheinyl_Trfase_dom_sf"/>
</dbReference>
<dbReference type="InterPro" id="IPR002582">
    <property type="entry name" value="ACPS"/>
</dbReference>
<dbReference type="InterPro" id="IPR004568">
    <property type="entry name" value="Ppantetheine-prot_Trfase_dom"/>
</dbReference>
<dbReference type="NCBIfam" id="TIGR00516">
    <property type="entry name" value="acpS"/>
    <property type="match status" value="1"/>
</dbReference>
<dbReference type="NCBIfam" id="TIGR00556">
    <property type="entry name" value="pantethn_trn"/>
    <property type="match status" value="1"/>
</dbReference>
<dbReference type="Pfam" id="PF01648">
    <property type="entry name" value="ACPS"/>
    <property type="match status" value="1"/>
</dbReference>
<dbReference type="SUPFAM" id="SSF56214">
    <property type="entry name" value="4'-phosphopantetheinyl transferase"/>
    <property type="match status" value="1"/>
</dbReference>
<evidence type="ECO:0000255" key="1">
    <source>
        <dbReference type="HAMAP-Rule" id="MF_00101"/>
    </source>
</evidence>
<reference key="1">
    <citation type="journal article" date="2010" name="J. Bacteriol.">
        <title>The genetic basis of laboratory adaptation in Caulobacter crescentus.</title>
        <authorList>
            <person name="Marks M.E."/>
            <person name="Castro-Rojas C.M."/>
            <person name="Teiling C."/>
            <person name="Du L."/>
            <person name="Kapatral V."/>
            <person name="Walunas T.L."/>
            <person name="Crosson S."/>
        </authorList>
    </citation>
    <scope>NUCLEOTIDE SEQUENCE [LARGE SCALE GENOMIC DNA]</scope>
    <source>
        <strain>NA1000 / CB15N</strain>
    </source>
</reference>
<feature type="chain" id="PRO_1000118801" description="Holo-[acyl-carrier-protein] synthase">
    <location>
        <begin position="1"/>
        <end position="133"/>
    </location>
</feature>
<feature type="binding site" evidence="1">
    <location>
        <position position="8"/>
    </location>
    <ligand>
        <name>Mg(2+)</name>
        <dbReference type="ChEBI" id="CHEBI:18420"/>
    </ligand>
</feature>
<feature type="binding site" evidence="1">
    <location>
        <position position="57"/>
    </location>
    <ligand>
        <name>Mg(2+)</name>
        <dbReference type="ChEBI" id="CHEBI:18420"/>
    </ligand>
</feature>
<accession>B8H624</accession>
<keyword id="KW-0963">Cytoplasm</keyword>
<keyword id="KW-0275">Fatty acid biosynthesis</keyword>
<keyword id="KW-0276">Fatty acid metabolism</keyword>
<keyword id="KW-0444">Lipid biosynthesis</keyword>
<keyword id="KW-0443">Lipid metabolism</keyword>
<keyword id="KW-0460">Magnesium</keyword>
<keyword id="KW-0479">Metal-binding</keyword>
<keyword id="KW-1185">Reference proteome</keyword>
<keyword id="KW-0808">Transferase</keyword>
<name>ACPS_CAUVN</name>
<gene>
    <name evidence="1" type="primary">acpS</name>
    <name type="ordered locus">CCNA_01627</name>
</gene>
<protein>
    <recommendedName>
        <fullName evidence="1">Holo-[acyl-carrier-protein] synthase</fullName>
        <shortName evidence="1">Holo-ACP synthase</shortName>
        <ecNumber evidence="1">2.7.8.7</ecNumber>
    </recommendedName>
    <alternativeName>
        <fullName evidence="1">4'-phosphopantetheinyl transferase AcpS</fullName>
    </alternativeName>
</protein>
<proteinExistence type="inferred from homology"/>